<comment type="function">
    <text evidence="4">Regulates the trafficking and gating properties of AMPA-selective glutamate receptors (AMPARs). Promotes their targeting to the cell membrane and synapses and modulates their gating properties by regulating their rates of activation, deactivation and desensitization. Blocks CACNG8-mediated resensitization of AMPA receptors.</text>
</comment>
<comment type="subunit">
    <text evidence="1 2 4">Acts as an auxiliary subunit for AMPA-selective glutamate receptors (AMPARs). Found in a complex with GRIA1, GRIA2, GRIA3, GRIA4, CNIH3, CACNG2, CACNG3, CACNG4, CACNG5, CACNG7 and CACNG8 (By similarity). Interacts with CACGN8 (By similarity). Interacts with GRIA1. Found in a complex with GRIA1, GRIA2, GRIA3, GRIA4, DLG4 and CACNG8 (By similarity).</text>
</comment>
<comment type="interaction">
    <interactant intactId="EBI-12815321">
        <id>Q6PI25</id>
    </interactant>
    <interactant intactId="EBI-6657396">
        <id>P19397</id>
        <label>CD53</label>
    </interactant>
    <organismsDiffer>false</organismsDiffer>
    <experiments>3</experiments>
</comment>
<comment type="interaction">
    <interactant intactId="EBI-12815321">
        <id>Q6PI25</id>
    </interactant>
    <interactant intactId="EBI-6942903">
        <id>Q96BA8</id>
        <label>CREB3L1</label>
    </interactant>
    <organismsDiffer>false</organismsDiffer>
    <experiments>3</experiments>
</comment>
<comment type="interaction">
    <interactant intactId="EBI-12815321">
        <id>Q6PI25</id>
    </interactant>
    <interactant intactId="EBI-3917143">
        <id>Q5T7V8</id>
        <label>GORAB</label>
    </interactant>
    <organismsDiffer>false</organismsDiffer>
    <experiments>3</experiments>
</comment>
<comment type="interaction">
    <interactant intactId="EBI-12815321">
        <id>Q6PI25</id>
    </interactant>
    <interactant intactId="EBI-11427100">
        <id>P31937</id>
        <label>HIBADH</label>
    </interactant>
    <organismsDiffer>false</organismsDiffer>
    <experiments>3</experiments>
</comment>
<comment type="interaction">
    <interactant intactId="EBI-12815321">
        <id>Q6PI25</id>
    </interactant>
    <interactant intactId="EBI-8638294">
        <id>Q9NUH8</id>
        <label>TMEM14B</label>
    </interactant>
    <organismsDiffer>false</organismsDiffer>
    <experiments>3</experiments>
</comment>
<comment type="interaction">
    <interactant intactId="EBI-12815321">
        <id>Q6PI25</id>
    </interactant>
    <interactant intactId="EBI-12345267">
        <id>O15393-2</id>
        <label>TMPRSS2</label>
    </interactant>
    <organismsDiffer>false</organismsDiffer>
    <experiments>3</experiments>
</comment>
<comment type="subcellular location">
    <subcellularLocation>
        <location evidence="1">Endoplasmic reticulum membrane</location>
        <topology evidence="1">Multi-pass membrane protein</topology>
    </subcellularLocation>
    <subcellularLocation>
        <location evidence="1">Postsynaptic cell membrane</location>
        <topology evidence="1">Multi-pass membrane protein</topology>
    </subcellularLocation>
    <subcellularLocation>
        <location evidence="1">Cell projection</location>
        <location evidence="1">Dendrite</location>
    </subcellularLocation>
    <subcellularLocation>
        <location evidence="1">Cell projection</location>
        <location evidence="1">Dendritic spine</location>
    </subcellularLocation>
    <subcellularLocation>
        <location evidence="1">Postsynaptic density</location>
    </subcellularLocation>
    <text evidence="1">Also localizes to the cell membrane of extrasynaptic sites (dendritic shafts, spines of pyramidal cells).</text>
</comment>
<comment type="tissue specificity">
    <text evidence="5">Expression is up-regulated in dorsolateral prefrontal cortex of patients with schizophrenia (postmortem brain study).</text>
</comment>
<comment type="similarity">
    <text evidence="6">Belongs to the cornichon family.</text>
</comment>
<reference key="1">
    <citation type="journal article" date="2004" name="Genome Res.">
        <title>The status, quality, and expansion of the NIH full-length cDNA project: the Mammalian Gene Collection (MGC).</title>
        <authorList>
            <consortium name="The MGC Project Team"/>
        </authorList>
    </citation>
    <scope>NUCLEOTIDE SEQUENCE [LARGE SCALE MRNA]</scope>
    <source>
        <tissue>Pancreas</tissue>
    </source>
</reference>
<reference key="2">
    <citation type="journal article" date="2010" name="Proc. Natl. Acad. Sci. U.S.A.">
        <title>Functional comparison of the effects of TARPs and cornichons on AMPA receptor trafficking and gating.</title>
        <authorList>
            <person name="Shi Y."/>
            <person name="Suh Y.H."/>
            <person name="Milstein A.D."/>
            <person name="Isozaki K."/>
            <person name="Schmid S.M."/>
            <person name="Roche K.W."/>
            <person name="Nicoll R.A."/>
        </authorList>
    </citation>
    <scope>FUNCTION</scope>
    <scope>INTERACTION WITH GRIA1</scope>
</reference>
<reference key="3">
    <citation type="journal article" date="2012" name="NeuroReport">
        <title>Upregulation of cornichon transcripts in the dorsolateral prefrontal cortex in schizophrenia.</title>
        <authorList>
            <person name="Drummond J.B."/>
            <person name="Simmons M."/>
            <person name="Haroutunian V."/>
            <person name="Meador-Woodruff J.H."/>
        </authorList>
    </citation>
    <scope>TISSUE SPECIFICITY</scope>
</reference>
<evidence type="ECO:0000250" key="1"/>
<evidence type="ECO:0000250" key="2">
    <source>
        <dbReference type="UniProtKB" id="O35089"/>
    </source>
</evidence>
<evidence type="ECO:0000255" key="3"/>
<evidence type="ECO:0000269" key="4">
    <source>
    </source>
</evidence>
<evidence type="ECO:0000269" key="5">
    <source>
    </source>
</evidence>
<evidence type="ECO:0000305" key="6"/>
<evidence type="ECO:0000312" key="7">
    <source>
        <dbReference type="HGNC" id="HGNC:28744"/>
    </source>
</evidence>
<evidence type="ECO:0007829" key="8">
    <source>
        <dbReference type="PDB" id="8SS3"/>
    </source>
</evidence>
<evidence type="ECO:0007829" key="9">
    <source>
        <dbReference type="PDB" id="8SS7"/>
    </source>
</evidence>
<sequence>MAFTFAAFCYMLTLVLCASLIFFVIWHIIAFDELRTDFKNPIDQGNPARARERLKNIERICCLLRKLVVPEYSIHGLFCLMFLCAAEWVTLGLNIPLLFYHLWRYFHRPADGSEVMYDAVSIMNADILNYCQKESWCKLAFYLLSFFYYLYSMVYTLVSF</sequence>
<gene>
    <name evidence="7" type="primary">CNIH2</name>
    <name type="synonym">CNIL</name>
</gene>
<dbReference type="EMBL" id="BC047953">
    <property type="protein sequence ID" value="AAH47953.1"/>
    <property type="molecule type" value="mRNA"/>
</dbReference>
<dbReference type="CCDS" id="CCDS8131.1"/>
<dbReference type="RefSeq" id="NP_872359.1">
    <property type="nucleotide sequence ID" value="NM_182553.3"/>
</dbReference>
<dbReference type="PDB" id="8SS2">
    <property type="method" value="EM"/>
    <property type="resolution" value="3.58 A"/>
    <property type="chains" value="E/F=1-160"/>
</dbReference>
<dbReference type="PDB" id="8SS3">
    <property type="method" value="EM"/>
    <property type="resolution" value="3.21 A"/>
    <property type="chains" value="E/F=1-160"/>
</dbReference>
<dbReference type="PDB" id="8SS4">
    <property type="method" value="EM"/>
    <property type="resolution" value="3.30 A"/>
    <property type="chains" value="E/F=1-160"/>
</dbReference>
<dbReference type="PDB" id="8SS6">
    <property type="method" value="EM"/>
    <property type="resolution" value="3.01 A"/>
    <property type="chains" value="E/F=1-160"/>
</dbReference>
<dbReference type="PDB" id="8SS7">
    <property type="method" value="EM"/>
    <property type="resolution" value="2.76 A"/>
    <property type="chains" value="E/F=1-160"/>
</dbReference>
<dbReference type="PDB" id="8SSA">
    <property type="method" value="EM"/>
    <property type="resolution" value="3.88 A"/>
    <property type="chains" value="E/F=1-160"/>
</dbReference>
<dbReference type="PDB" id="8SSB">
    <property type="method" value="EM"/>
    <property type="resolution" value="3.66 A"/>
    <property type="chains" value="E/F=1-160"/>
</dbReference>
<dbReference type="PDBsum" id="8SS2"/>
<dbReference type="PDBsum" id="8SS3"/>
<dbReference type="PDBsum" id="8SS4"/>
<dbReference type="PDBsum" id="8SS6"/>
<dbReference type="PDBsum" id="8SS7"/>
<dbReference type="PDBsum" id="8SSA"/>
<dbReference type="PDBsum" id="8SSB"/>
<dbReference type="EMDB" id="EMD-40741"/>
<dbReference type="EMDB" id="EMD-40742"/>
<dbReference type="EMDB" id="EMD-40743"/>
<dbReference type="EMDB" id="EMD-40745"/>
<dbReference type="EMDB" id="EMD-40746"/>
<dbReference type="EMDB" id="EMD-40749"/>
<dbReference type="EMDB" id="EMD-40750"/>
<dbReference type="SMR" id="Q6PI25"/>
<dbReference type="BioGRID" id="129026">
    <property type="interactions" value="10"/>
</dbReference>
<dbReference type="FunCoup" id="Q6PI25">
    <property type="interactions" value="121"/>
</dbReference>
<dbReference type="IntAct" id="Q6PI25">
    <property type="interactions" value="6"/>
</dbReference>
<dbReference type="STRING" id="9606.ENSP00000310003"/>
<dbReference type="TCDB" id="8.A.61.1.8">
    <property type="family name" value="the endoplasmic reticulum-derived vesicle protein, erv14 (erv14) family"/>
</dbReference>
<dbReference type="PhosphoSitePlus" id="Q6PI25"/>
<dbReference type="BioMuta" id="CNIH2"/>
<dbReference type="DMDM" id="61563951"/>
<dbReference type="MassIVE" id="Q6PI25"/>
<dbReference type="PaxDb" id="9606-ENSP00000310003"/>
<dbReference type="PeptideAtlas" id="Q6PI25"/>
<dbReference type="ProteomicsDB" id="67134"/>
<dbReference type="Antibodypedia" id="30113">
    <property type="antibodies" value="137 antibodies from 23 providers"/>
</dbReference>
<dbReference type="DNASU" id="254263"/>
<dbReference type="Ensembl" id="ENST00000311445.7">
    <property type="protein sequence ID" value="ENSP00000310003.6"/>
    <property type="gene ID" value="ENSG00000174871.11"/>
</dbReference>
<dbReference type="GeneID" id="254263"/>
<dbReference type="KEGG" id="hsa:254263"/>
<dbReference type="MANE-Select" id="ENST00000311445.7">
    <property type="protein sequence ID" value="ENSP00000310003.6"/>
    <property type="RefSeq nucleotide sequence ID" value="NM_182553.3"/>
    <property type="RefSeq protein sequence ID" value="NP_872359.1"/>
</dbReference>
<dbReference type="UCSC" id="uc001ohi.3">
    <property type="organism name" value="human"/>
</dbReference>
<dbReference type="AGR" id="HGNC:28744"/>
<dbReference type="CTD" id="254263"/>
<dbReference type="DisGeNET" id="254263"/>
<dbReference type="GeneCards" id="CNIH2"/>
<dbReference type="HGNC" id="HGNC:28744">
    <property type="gene designation" value="CNIH2"/>
</dbReference>
<dbReference type="HPA" id="ENSG00000174871">
    <property type="expression patterns" value="Tissue enriched (brain)"/>
</dbReference>
<dbReference type="MIM" id="611288">
    <property type="type" value="gene"/>
</dbReference>
<dbReference type="neXtProt" id="NX_Q6PI25"/>
<dbReference type="OpenTargets" id="ENSG00000174871"/>
<dbReference type="PharmGKB" id="PA134887358"/>
<dbReference type="VEuPathDB" id="HostDB:ENSG00000174871"/>
<dbReference type="eggNOG" id="KOG2729">
    <property type="taxonomic scope" value="Eukaryota"/>
</dbReference>
<dbReference type="GeneTree" id="ENSGT00950000182834"/>
<dbReference type="InParanoid" id="Q6PI25"/>
<dbReference type="OMA" id="ESWCKMG"/>
<dbReference type="OrthoDB" id="434393at2759"/>
<dbReference type="PAN-GO" id="Q6PI25">
    <property type="GO annotations" value="3 GO annotations based on evolutionary models"/>
</dbReference>
<dbReference type="PhylomeDB" id="Q6PI25"/>
<dbReference type="TreeFam" id="TF300083"/>
<dbReference type="PathwayCommons" id="Q6PI25"/>
<dbReference type="Reactome" id="R-HSA-204005">
    <property type="pathway name" value="COPII-mediated vesicle transport"/>
</dbReference>
<dbReference type="Reactome" id="R-HSA-5694530">
    <property type="pathway name" value="Cargo concentration in the ER"/>
</dbReference>
<dbReference type="SignaLink" id="Q6PI25"/>
<dbReference type="BioGRID-ORCS" id="254263">
    <property type="hits" value="24 hits in 1141 CRISPR screens"/>
</dbReference>
<dbReference type="GenomeRNAi" id="254263"/>
<dbReference type="Pharos" id="Q6PI25">
    <property type="development level" value="Tbio"/>
</dbReference>
<dbReference type="PRO" id="PR:Q6PI25"/>
<dbReference type="Proteomes" id="UP000005640">
    <property type="component" value="Chromosome 11"/>
</dbReference>
<dbReference type="RNAct" id="Q6PI25">
    <property type="molecule type" value="protein"/>
</dbReference>
<dbReference type="Bgee" id="ENSG00000174871">
    <property type="expression patterns" value="Expressed in cortical plate and 110 other cell types or tissues"/>
</dbReference>
<dbReference type="ExpressionAtlas" id="Q6PI25">
    <property type="expression patterns" value="baseline and differential"/>
</dbReference>
<dbReference type="GO" id="GO:0032281">
    <property type="term" value="C:AMPA glutamate receptor complex"/>
    <property type="evidence" value="ECO:0000250"/>
    <property type="project" value="UniProtKB"/>
</dbReference>
<dbReference type="GO" id="GO:0030425">
    <property type="term" value="C:dendrite"/>
    <property type="evidence" value="ECO:0000250"/>
    <property type="project" value="UniProtKB"/>
</dbReference>
<dbReference type="GO" id="GO:0043198">
    <property type="term" value="C:dendritic shaft"/>
    <property type="evidence" value="ECO:0000250"/>
    <property type="project" value="UniProtKB"/>
</dbReference>
<dbReference type="GO" id="GO:0043197">
    <property type="term" value="C:dendritic spine"/>
    <property type="evidence" value="ECO:0000250"/>
    <property type="project" value="UniProtKB"/>
</dbReference>
<dbReference type="GO" id="GO:0005789">
    <property type="term" value="C:endoplasmic reticulum membrane"/>
    <property type="evidence" value="ECO:0000304"/>
    <property type="project" value="Reactome"/>
</dbReference>
<dbReference type="GO" id="GO:0033116">
    <property type="term" value="C:endoplasmic reticulum-Golgi intermediate compartment membrane"/>
    <property type="evidence" value="ECO:0000304"/>
    <property type="project" value="Reactome"/>
</dbReference>
<dbReference type="GO" id="GO:0012507">
    <property type="term" value="C:ER to Golgi transport vesicle membrane"/>
    <property type="evidence" value="ECO:0000304"/>
    <property type="project" value="Reactome"/>
</dbReference>
<dbReference type="GO" id="GO:0014069">
    <property type="term" value="C:postsynaptic density"/>
    <property type="evidence" value="ECO:0000250"/>
    <property type="project" value="UniProtKB"/>
</dbReference>
<dbReference type="GO" id="GO:0045211">
    <property type="term" value="C:postsynaptic membrane"/>
    <property type="evidence" value="ECO:0000250"/>
    <property type="project" value="UniProtKB"/>
</dbReference>
<dbReference type="GO" id="GO:0045202">
    <property type="term" value="C:synapse"/>
    <property type="evidence" value="ECO:0000318"/>
    <property type="project" value="GO_Central"/>
</dbReference>
<dbReference type="GO" id="GO:0005102">
    <property type="term" value="F:signaling receptor binding"/>
    <property type="evidence" value="ECO:0000318"/>
    <property type="project" value="GO_Central"/>
</dbReference>
<dbReference type="GO" id="GO:2000311">
    <property type="term" value="P:regulation of AMPA receptor activity"/>
    <property type="evidence" value="ECO:0000314"/>
    <property type="project" value="UniProtKB"/>
</dbReference>
<dbReference type="GO" id="GO:0035249">
    <property type="term" value="P:synaptic transmission, glutamatergic"/>
    <property type="evidence" value="ECO:0000318"/>
    <property type="project" value="GO_Central"/>
</dbReference>
<dbReference type="GO" id="GO:0016192">
    <property type="term" value="P:vesicle-mediated transport"/>
    <property type="evidence" value="ECO:0007669"/>
    <property type="project" value="InterPro"/>
</dbReference>
<dbReference type="InterPro" id="IPR003377">
    <property type="entry name" value="Cornichon"/>
</dbReference>
<dbReference type="InterPro" id="IPR033466">
    <property type="entry name" value="Cornichon_conserved"/>
</dbReference>
<dbReference type="PANTHER" id="PTHR12290">
    <property type="entry name" value="CORNICHON-RELATED"/>
    <property type="match status" value="1"/>
</dbReference>
<dbReference type="Pfam" id="PF03311">
    <property type="entry name" value="Cornichon"/>
    <property type="match status" value="2"/>
</dbReference>
<dbReference type="SMART" id="SM01398">
    <property type="entry name" value="Cornichon"/>
    <property type="match status" value="1"/>
</dbReference>
<dbReference type="PROSITE" id="PS01340">
    <property type="entry name" value="CORNICHON"/>
    <property type="match status" value="1"/>
</dbReference>
<keyword id="KW-0002">3D-structure</keyword>
<keyword id="KW-1003">Cell membrane</keyword>
<keyword id="KW-0966">Cell projection</keyword>
<keyword id="KW-0256">Endoplasmic reticulum</keyword>
<keyword id="KW-0472">Membrane</keyword>
<keyword id="KW-0628">Postsynaptic cell membrane</keyword>
<keyword id="KW-1267">Proteomics identification</keyword>
<keyword id="KW-1185">Reference proteome</keyword>
<keyword id="KW-0770">Synapse</keyword>
<keyword id="KW-0812">Transmembrane</keyword>
<keyword id="KW-1133">Transmembrane helix</keyword>
<organism>
    <name type="scientific">Homo sapiens</name>
    <name type="common">Human</name>
    <dbReference type="NCBI Taxonomy" id="9606"/>
    <lineage>
        <taxon>Eukaryota</taxon>
        <taxon>Metazoa</taxon>
        <taxon>Chordata</taxon>
        <taxon>Craniata</taxon>
        <taxon>Vertebrata</taxon>
        <taxon>Euteleostomi</taxon>
        <taxon>Mammalia</taxon>
        <taxon>Eutheria</taxon>
        <taxon>Euarchontoglires</taxon>
        <taxon>Primates</taxon>
        <taxon>Haplorrhini</taxon>
        <taxon>Catarrhini</taxon>
        <taxon>Hominidae</taxon>
        <taxon>Homo</taxon>
    </lineage>
</organism>
<accession>Q6PI25</accession>
<protein>
    <recommendedName>
        <fullName evidence="6">Protein cornichon homolog 2</fullName>
        <shortName>CNIH-2</shortName>
    </recommendedName>
    <alternativeName>
        <fullName>Cornichon family AMPA receptor auxiliary protein 2</fullName>
    </alternativeName>
    <alternativeName>
        <fullName>Cornichon-like protein</fullName>
    </alternativeName>
</protein>
<feature type="chain" id="PRO_0000122225" description="Protein cornichon homolog 2">
    <location>
        <begin position="1"/>
        <end position="160"/>
    </location>
</feature>
<feature type="topological domain" description="Cytoplasmic" evidence="3">
    <location>
        <begin position="1"/>
        <end position="10"/>
    </location>
</feature>
<feature type="transmembrane region" description="Helical" evidence="3">
    <location>
        <begin position="11"/>
        <end position="31"/>
    </location>
</feature>
<feature type="topological domain" description="Lumenal" evidence="3">
    <location>
        <begin position="32"/>
        <end position="72"/>
    </location>
</feature>
<feature type="transmembrane region" description="Helical" evidence="3">
    <location>
        <begin position="73"/>
        <end position="93"/>
    </location>
</feature>
<feature type="topological domain" description="Cytoplasmic" evidence="3">
    <location>
        <begin position="94"/>
        <end position="138"/>
    </location>
</feature>
<feature type="transmembrane region" description="Helical" evidence="3">
    <location>
        <begin position="139"/>
        <end position="159"/>
    </location>
</feature>
<feature type="topological domain" description="Lumenal" evidence="3">
    <location>
        <position position="160"/>
    </location>
</feature>
<feature type="helix" evidence="9">
    <location>
        <begin position="5"/>
        <end position="36"/>
    </location>
</feature>
<feature type="helix" evidence="9">
    <location>
        <begin position="57"/>
        <end position="65"/>
    </location>
</feature>
<feature type="helix" evidence="9">
    <location>
        <begin position="68"/>
        <end position="84"/>
    </location>
</feature>
<feature type="helix" evidence="9">
    <location>
        <begin position="88"/>
        <end position="106"/>
    </location>
</feature>
<feature type="strand" evidence="8">
    <location>
        <begin position="113"/>
        <end position="115"/>
    </location>
</feature>
<feature type="strand" evidence="9">
    <location>
        <begin position="117"/>
        <end position="120"/>
    </location>
</feature>
<feature type="strand" evidence="9">
    <location>
        <begin position="124"/>
        <end position="126"/>
    </location>
</feature>
<feature type="helix" evidence="9">
    <location>
        <begin position="127"/>
        <end position="158"/>
    </location>
</feature>
<name>CNIH2_HUMAN</name>
<proteinExistence type="evidence at protein level"/>